<protein>
    <recommendedName>
        <fullName evidence="6">Chlorotoxin-like peptide Bm12-b</fullName>
    </recommendedName>
</protein>
<reference key="1">
    <citation type="submission" date="2000-12" db="EMBL/GenBank/DDBJ databases">
        <title>A novel neurotoxin from scorpion BmK.</title>
        <authorList>
            <person name="Xu C.-Q."/>
            <person name="Chi C.-W."/>
        </authorList>
    </citation>
    <scope>NUCLEOTIDE SEQUENCE [MRNA]</scope>
</reference>
<reference key="2">
    <citation type="journal article" date="2012" name="Proteomics">
        <title>Short-chain peptides identification of scorpion Buthus martensi Karsch venom by employing high orthogonal 2D-HPLC system and tandem mass spectrometry.</title>
        <authorList>
            <person name="Xu J."/>
            <person name="Zhang X."/>
            <person name="Guo Z."/>
            <person name="Yan J."/>
            <person name="Yu L."/>
            <person name="Li X."/>
            <person name="Xue X."/>
            <person name="Liang X."/>
        </authorList>
    </citation>
    <scope>MASS SPECTROMETRY</scope>
    <scope>SUBCELLULAR LOCATION</scope>
    <source>
        <tissue>Venom</tissue>
    </source>
</reference>
<accession>Q9BJW4</accession>
<feature type="signal peptide" evidence="3">
    <location>
        <begin position="1"/>
        <end position="24"/>
    </location>
</feature>
<feature type="chain" id="PRO_0000035316" description="Chlorotoxin-like peptide Bm12-b" evidence="5">
    <location>
        <begin position="25"/>
        <end position="59"/>
    </location>
</feature>
<feature type="disulfide bond" evidence="1 4">
    <location>
        <begin position="25"/>
        <end position="42"/>
    </location>
</feature>
<feature type="disulfide bond" evidence="1 4">
    <location>
        <begin position="28"/>
        <end position="49"/>
    </location>
</feature>
<feature type="disulfide bond" evidence="1 4">
    <location>
        <begin position="39"/>
        <end position="54"/>
    </location>
</feature>
<feature type="disulfide bond" evidence="1 4">
    <location>
        <begin position="43"/>
        <end position="56"/>
    </location>
</feature>
<dbReference type="EMBL" id="AF327643">
    <property type="protein sequence ID" value="AAK16444.1"/>
    <property type="molecule type" value="mRNA"/>
</dbReference>
<dbReference type="PIR" id="A59356">
    <property type="entry name" value="A59356"/>
</dbReference>
<dbReference type="SMR" id="Q9BJW4"/>
<dbReference type="GO" id="GO:0005576">
    <property type="term" value="C:extracellular region"/>
    <property type="evidence" value="ECO:0007669"/>
    <property type="project" value="UniProtKB-SubCell"/>
</dbReference>
<dbReference type="GO" id="GO:0017081">
    <property type="term" value="F:chloride channel regulator activity"/>
    <property type="evidence" value="ECO:0007669"/>
    <property type="project" value="UniProtKB-KW"/>
</dbReference>
<dbReference type="GO" id="GO:0090729">
    <property type="term" value="F:toxin activity"/>
    <property type="evidence" value="ECO:0007669"/>
    <property type="project" value="UniProtKB-KW"/>
</dbReference>
<dbReference type="InterPro" id="IPR036574">
    <property type="entry name" value="Scorpion_toxin-like_sf"/>
</dbReference>
<dbReference type="InterPro" id="IPR007958">
    <property type="entry name" value="Scorpion_toxinS_Cl_inh"/>
</dbReference>
<dbReference type="Pfam" id="PF05294">
    <property type="entry name" value="Toxin_5"/>
    <property type="match status" value="1"/>
</dbReference>
<dbReference type="SUPFAM" id="SSF57095">
    <property type="entry name" value="Scorpion toxin-like"/>
    <property type="match status" value="1"/>
</dbReference>
<dbReference type="PROSITE" id="PS51200">
    <property type="entry name" value="SHORT_SCORPION_CHLORIDE"/>
    <property type="match status" value="1"/>
</dbReference>
<organism>
    <name type="scientific">Olivierus martensii</name>
    <name type="common">Manchurian scorpion</name>
    <name type="synonym">Mesobuthus martensii</name>
    <dbReference type="NCBI Taxonomy" id="34649"/>
    <lineage>
        <taxon>Eukaryota</taxon>
        <taxon>Metazoa</taxon>
        <taxon>Ecdysozoa</taxon>
        <taxon>Arthropoda</taxon>
        <taxon>Chelicerata</taxon>
        <taxon>Arachnida</taxon>
        <taxon>Scorpiones</taxon>
        <taxon>Buthida</taxon>
        <taxon>Buthoidea</taxon>
        <taxon>Buthidae</taxon>
        <taxon>Olivierus</taxon>
    </lineage>
</organism>
<sequence length="59" mass="6484">MKFLYGIVFIALFLTVMFATQTDGCGPCFTTDANMARKCRECCGGNGKCFGPQCLCNRE</sequence>
<proteinExistence type="evidence at protein level"/>
<keyword id="KW-1265">Chloride channel impairing toxin</keyword>
<keyword id="KW-1015">Disulfide bond</keyword>
<keyword id="KW-0872">Ion channel impairing toxin</keyword>
<keyword id="KW-0960">Knottin</keyword>
<keyword id="KW-0964">Secreted</keyword>
<keyword id="KW-0732">Signal</keyword>
<keyword id="KW-0800">Toxin</keyword>
<keyword id="KW-0870">Voltage-gated chloride channel impairing toxin</keyword>
<comment type="function">
    <text evidence="2">Toxin with unknown function in healthy organisms. On glioma cells, interacts with chloride channels (probably ClC-3/CLCN3) and MMP2 at the surface of glioma cells. This complex is then internalized via caveolae, thus inhibiting the chloride channels necessary for cell shrinkage and tumor propagation (By similarity).</text>
</comment>
<comment type="subcellular location">
    <subcellularLocation>
        <location evidence="5">Secreted</location>
    </subcellularLocation>
</comment>
<comment type="tissue specificity">
    <text evidence="7">Expressed by the venom gland.</text>
</comment>
<comment type="domain">
    <text evidence="1">The presence of a 'disulfide through disulfide knot' structurally defines this protein as a knottin.</text>
</comment>
<comment type="mass spectrometry" mass="3764.45" method="Electrospray" evidence="5">
    <text>Monoisotopic mass.</text>
</comment>
<comment type="similarity">
    <text evidence="4">Belongs to the short scorpion toxin superfamily. Chloride channel inhibitor family.</text>
</comment>
<name>CTXLB_OLIMR</name>
<evidence type="ECO:0000250" key="1">
    <source>
        <dbReference type="UniProtKB" id="P15222"/>
    </source>
</evidence>
<evidence type="ECO:0000250" key="2">
    <source>
        <dbReference type="UniProtKB" id="Q9UAD0"/>
    </source>
</evidence>
<evidence type="ECO:0000255" key="3"/>
<evidence type="ECO:0000255" key="4">
    <source>
        <dbReference type="PROSITE-ProRule" id="PRU00545"/>
    </source>
</evidence>
<evidence type="ECO:0000269" key="5">
    <source>
    </source>
</evidence>
<evidence type="ECO:0000303" key="6">
    <source>
    </source>
</evidence>
<evidence type="ECO:0000305" key="7">
    <source>
    </source>
</evidence>